<feature type="chain" id="PRO_0000289136" description="Unconventional myosin-XVI">
    <location>
        <begin position="1"/>
        <end position="1858"/>
    </location>
</feature>
<feature type="repeat" description="ANK 1" evidence="4">
    <location>
        <begin position="59"/>
        <end position="88"/>
    </location>
</feature>
<feature type="repeat" description="ANK 2" evidence="4">
    <location>
        <begin position="92"/>
        <end position="121"/>
    </location>
</feature>
<feature type="repeat" description="ANK 3" evidence="4">
    <location>
        <begin position="125"/>
        <end position="154"/>
    </location>
</feature>
<feature type="repeat" description="ANK 4" evidence="4">
    <location>
        <begin position="158"/>
        <end position="189"/>
    </location>
</feature>
<feature type="repeat" description="ANK 5" evidence="4">
    <location>
        <begin position="191"/>
        <end position="217"/>
    </location>
</feature>
<feature type="repeat" description="ANK 6" evidence="4">
    <location>
        <begin position="221"/>
        <end position="250"/>
    </location>
</feature>
<feature type="repeat" description="ANK 7" evidence="4">
    <location>
        <begin position="254"/>
        <end position="283"/>
    </location>
</feature>
<feature type="domain" description="Myosin motor" evidence="6">
    <location>
        <begin position="401"/>
        <end position="1145"/>
    </location>
</feature>
<feature type="domain" description="IQ" evidence="5">
    <location>
        <begin position="1147"/>
        <end position="1176"/>
    </location>
</feature>
<feature type="region of interest" description="Disordered" evidence="7">
    <location>
        <begin position="373"/>
        <end position="392"/>
    </location>
</feature>
<feature type="region of interest" description="Involved in CYFIP1- and NCKAP1-binding" evidence="1">
    <location>
        <begin position="1111"/>
        <end position="1377"/>
    </location>
</feature>
<feature type="region of interest" description="Disordered" evidence="7">
    <location>
        <begin position="1219"/>
        <end position="1250"/>
    </location>
</feature>
<feature type="region of interest" description="Disordered" evidence="7">
    <location>
        <begin position="1282"/>
        <end position="1307"/>
    </location>
</feature>
<feature type="region of interest" description="Disordered" evidence="7">
    <location>
        <begin position="1326"/>
        <end position="1409"/>
    </location>
</feature>
<feature type="region of interest" description="Disordered" evidence="7">
    <location>
        <begin position="1448"/>
        <end position="1674"/>
    </location>
</feature>
<feature type="region of interest" description="Disordered" evidence="7">
    <location>
        <begin position="1697"/>
        <end position="1731"/>
    </location>
</feature>
<feature type="region of interest" description="Disordered" evidence="7">
    <location>
        <begin position="1747"/>
        <end position="1778"/>
    </location>
</feature>
<feature type="region of interest" description="Disordered" evidence="7">
    <location>
        <begin position="1821"/>
        <end position="1844"/>
    </location>
</feature>
<feature type="compositionally biased region" description="Basic and acidic residues" evidence="7">
    <location>
        <begin position="1219"/>
        <end position="1245"/>
    </location>
</feature>
<feature type="compositionally biased region" description="Basic residues" evidence="7">
    <location>
        <begin position="1346"/>
        <end position="1355"/>
    </location>
</feature>
<feature type="compositionally biased region" description="Low complexity" evidence="7">
    <location>
        <begin position="1370"/>
        <end position="1385"/>
    </location>
</feature>
<feature type="compositionally biased region" description="Pro residues" evidence="7">
    <location>
        <begin position="1478"/>
        <end position="1499"/>
    </location>
</feature>
<feature type="compositionally biased region" description="Polar residues" evidence="7">
    <location>
        <begin position="1533"/>
        <end position="1545"/>
    </location>
</feature>
<feature type="compositionally biased region" description="Pro residues" evidence="7">
    <location>
        <begin position="1570"/>
        <end position="1587"/>
    </location>
</feature>
<feature type="compositionally biased region" description="Pro residues" evidence="7">
    <location>
        <begin position="1656"/>
        <end position="1665"/>
    </location>
</feature>
<feature type="compositionally biased region" description="Polar residues" evidence="7">
    <location>
        <begin position="1715"/>
        <end position="1731"/>
    </location>
</feature>
<feature type="compositionally biased region" description="Polar residues" evidence="7">
    <location>
        <begin position="1763"/>
        <end position="1773"/>
    </location>
</feature>
<feature type="binding site" evidence="6">
    <location>
        <begin position="497"/>
        <end position="504"/>
    </location>
    <ligand>
        <name>ATP</name>
        <dbReference type="ChEBI" id="CHEBI:30616"/>
    </ligand>
</feature>
<feature type="splice variant" id="VSP_052447" description="In isoform 4." evidence="18">
    <location>
        <begin position="1"/>
        <end position="192"/>
    </location>
</feature>
<feature type="splice variant" id="VSP_052448" description="In isoform 4." evidence="18">
    <location>
        <begin position="206"/>
        <end position="225"/>
    </location>
</feature>
<feature type="splice variant" id="VSP_052449" description="In isoform 3 and isoform 4." evidence="18">
    <original>TSENV</original>
    <variation>RGRCF</variation>
    <location>
        <begin position="936"/>
        <end position="940"/>
    </location>
</feature>
<feature type="splice variant" id="VSP_052450" description="In isoform 3 and isoform 4." evidence="18">
    <location>
        <begin position="941"/>
        <end position="1858"/>
    </location>
</feature>
<feature type="splice variant" id="VSP_052451" description="In isoform 2." evidence="17">
    <location>
        <begin position="1091"/>
        <end position="1858"/>
    </location>
</feature>
<feature type="sequence variant" id="VAR_050214" description="In dbSNP:rs911973.">
    <original>D</original>
    <variation>E</variation>
    <location>
        <position position="181"/>
    </location>
</feature>
<feature type="sequence variant" id="VAR_050215" description="In dbSNP:rs405397.">
    <original>V</original>
    <variation>I</variation>
    <location>
        <position position="339"/>
    </location>
</feature>
<feature type="sequence variant" id="VAR_032584" description="In dbSNP:rs16973313." evidence="9">
    <original>M</original>
    <variation>T</variation>
    <location>
        <position position="385"/>
    </location>
</feature>
<feature type="sequence variant" id="VAR_088422" description="In dbSNP:rs767295227." evidence="15">
    <original>Y</original>
    <variation>C</variation>
    <location>
        <position position="829"/>
    </location>
</feature>
<feature type="sequence variant" id="VAR_032585" description="In dbSNP:rs3825491." evidence="8 9 11 12 16">
    <original>P</original>
    <variation>A</variation>
    <location>
        <position position="831"/>
    </location>
</feature>
<feature type="sequence variant" id="VAR_064737" description="Found in a renal cell carcinoma sample; somatic mutation." evidence="13">
    <original>L</original>
    <variation>H</variation>
    <location>
        <position position="1168"/>
    </location>
</feature>
<feature type="sequence variant" id="VAR_050216" description="In dbSNP:rs157024.">
    <original>I</original>
    <variation>M</variation>
    <location>
        <position position="1171"/>
    </location>
</feature>
<feature type="sequence variant" id="VAR_088423" description="In dbSNP:rs141597688." evidence="15">
    <original>A</original>
    <variation>T</variation>
    <location>
        <position position="1258"/>
    </location>
</feature>
<feature type="sequence conflict" description="In Ref. 6; CAD39107." evidence="19" ref="6">
    <original>K</original>
    <variation>E</variation>
    <location>
        <position position="555"/>
    </location>
</feature>
<feature type="sequence conflict" description="In Ref. 2; BAC87143." evidence="19" ref="2">
    <original>T</original>
    <variation>A</variation>
    <location>
        <position position="953"/>
    </location>
</feature>
<accession>Q9Y6X6</accession>
<accession>A6H8Y0</accession>
<accession>A8MTX3</accession>
<accession>Q5VYX4</accession>
<accession>Q5VYX5</accession>
<accession>Q5VYX6</accession>
<accession>Q6ZS13</accession>
<accession>Q8N3C2</accession>
<accession>Q8N948</accession>
<name>MYO16_HUMAN</name>
<gene>
    <name evidence="24" type="primary">MYO16</name>
    <name evidence="21" type="synonym">KIAA0865</name>
    <name evidence="24" type="synonym">MYO16B</name>
    <name type="synonym">NYAP3</name>
</gene>
<dbReference type="EMBL" id="AB020672">
    <property type="protein sequence ID" value="BAA74888.2"/>
    <property type="status" value="ALT_INIT"/>
    <property type="molecule type" value="mRNA"/>
</dbReference>
<dbReference type="EMBL" id="AK095691">
    <property type="protein sequence ID" value="BAC04608.1"/>
    <property type="status" value="ALT_INIT"/>
    <property type="molecule type" value="mRNA"/>
</dbReference>
<dbReference type="EMBL" id="AB290159">
    <property type="protein sequence ID" value="BAG06713.1"/>
    <property type="molecule type" value="mRNA"/>
</dbReference>
<dbReference type="EMBL" id="AL136132">
    <property type="status" value="NOT_ANNOTATED_CDS"/>
    <property type="molecule type" value="Genomic_DNA"/>
</dbReference>
<dbReference type="EMBL" id="AL157771">
    <property type="status" value="NOT_ANNOTATED_CDS"/>
    <property type="molecule type" value="Genomic_DNA"/>
</dbReference>
<dbReference type="EMBL" id="AL161431">
    <property type="status" value="NOT_ANNOTATED_CDS"/>
    <property type="molecule type" value="Genomic_DNA"/>
</dbReference>
<dbReference type="EMBL" id="AL353143">
    <property type="status" value="NOT_ANNOTATED_CDS"/>
    <property type="molecule type" value="Genomic_DNA"/>
</dbReference>
<dbReference type="EMBL" id="AL390918">
    <property type="status" value="NOT_ANNOTATED_CDS"/>
    <property type="molecule type" value="Genomic_DNA"/>
</dbReference>
<dbReference type="EMBL" id="AK127806">
    <property type="protein sequence ID" value="BAC87143.1"/>
    <property type="status" value="ALT_INIT"/>
    <property type="molecule type" value="mRNA"/>
</dbReference>
<dbReference type="EMBL" id="BC146791">
    <property type="protein sequence ID" value="AAI46792.1"/>
    <property type="molecule type" value="mRNA"/>
</dbReference>
<dbReference type="EMBL" id="AL834447">
    <property type="protein sequence ID" value="CAD39107.2"/>
    <property type="molecule type" value="mRNA"/>
</dbReference>
<dbReference type="CCDS" id="CCDS32008.1">
    <molecule id="Q9Y6X6-1"/>
</dbReference>
<dbReference type="RefSeq" id="NP_055826.1">
    <molecule id="Q9Y6X6-1"/>
    <property type="nucleotide sequence ID" value="NM_015011.3"/>
</dbReference>
<dbReference type="RefSeq" id="XP_011519364.1">
    <molecule id="Q9Y6X6-1"/>
    <property type="nucleotide sequence ID" value="XM_011521062.2"/>
</dbReference>
<dbReference type="SMR" id="Q9Y6X6"/>
<dbReference type="BioGRID" id="116666">
    <property type="interactions" value="11"/>
</dbReference>
<dbReference type="ELM" id="Q9Y6X6"/>
<dbReference type="FunCoup" id="Q9Y6X6">
    <property type="interactions" value="217"/>
</dbReference>
<dbReference type="IntAct" id="Q9Y6X6">
    <property type="interactions" value="10"/>
</dbReference>
<dbReference type="MINT" id="Q9Y6X6"/>
<dbReference type="STRING" id="9606.ENSP00000401633"/>
<dbReference type="GlyGen" id="Q9Y6X6">
    <property type="glycosylation" value="3 sites, 1 O-linked glycan (1 site)"/>
</dbReference>
<dbReference type="iPTMnet" id="Q9Y6X6"/>
<dbReference type="PhosphoSitePlus" id="Q9Y6X6"/>
<dbReference type="BioMuta" id="MYO16"/>
<dbReference type="DMDM" id="152112422"/>
<dbReference type="jPOST" id="Q9Y6X6"/>
<dbReference type="MassIVE" id="Q9Y6X6"/>
<dbReference type="PaxDb" id="9606-ENSP00000401633"/>
<dbReference type="PeptideAtlas" id="Q9Y6X6"/>
<dbReference type="ProteomicsDB" id="86817">
    <molecule id="Q9Y6X6-1"/>
</dbReference>
<dbReference type="ProteomicsDB" id="86818">
    <molecule id="Q9Y6X6-2"/>
</dbReference>
<dbReference type="ProteomicsDB" id="86819">
    <molecule id="Q9Y6X6-3"/>
</dbReference>
<dbReference type="ProteomicsDB" id="86820">
    <molecule id="Q9Y6X6-4"/>
</dbReference>
<dbReference type="Antibodypedia" id="42542">
    <property type="antibodies" value="76 antibodies from 20 providers"/>
</dbReference>
<dbReference type="DNASU" id="23026"/>
<dbReference type="Ensembl" id="ENST00000251041.10">
    <molecule id="Q9Y6X6-3"/>
    <property type="protein sequence ID" value="ENSP00000251041.5"/>
    <property type="gene ID" value="ENSG00000041515.16"/>
</dbReference>
<dbReference type="Ensembl" id="ENST00000356711.7">
    <molecule id="Q9Y6X6-1"/>
    <property type="protein sequence ID" value="ENSP00000349145.2"/>
    <property type="gene ID" value="ENSG00000041515.16"/>
</dbReference>
<dbReference type="GeneID" id="23026"/>
<dbReference type="KEGG" id="hsa:23026"/>
<dbReference type="UCSC" id="uc001vqt.1">
    <molecule id="Q9Y6X6-1"/>
    <property type="organism name" value="human"/>
</dbReference>
<dbReference type="AGR" id="HGNC:29822"/>
<dbReference type="CTD" id="23026"/>
<dbReference type="DisGeNET" id="23026"/>
<dbReference type="GeneCards" id="MYO16"/>
<dbReference type="HGNC" id="HGNC:29822">
    <property type="gene designation" value="MYO16"/>
</dbReference>
<dbReference type="HPA" id="ENSG00000041515">
    <property type="expression patterns" value="Tissue enhanced (brain, liver)"/>
</dbReference>
<dbReference type="MalaCards" id="MYO16"/>
<dbReference type="MIM" id="615479">
    <property type="type" value="gene"/>
</dbReference>
<dbReference type="neXtProt" id="NX_Q9Y6X6"/>
<dbReference type="OpenTargets" id="ENSG00000041515"/>
<dbReference type="PharmGKB" id="PA162396437"/>
<dbReference type="VEuPathDB" id="HostDB:ENSG00000041515"/>
<dbReference type="eggNOG" id="KOG0161">
    <property type="taxonomic scope" value="Eukaryota"/>
</dbReference>
<dbReference type="eggNOG" id="KOG0515">
    <property type="taxonomic scope" value="Eukaryota"/>
</dbReference>
<dbReference type="GeneTree" id="ENSGT00940000158920"/>
<dbReference type="HOGENOM" id="CLU_013794_0_0_1"/>
<dbReference type="InParanoid" id="Q9Y6X6"/>
<dbReference type="OrthoDB" id="9935913at2759"/>
<dbReference type="PAN-GO" id="Q9Y6X6">
    <property type="GO annotations" value="8 GO annotations based on evolutionary models"/>
</dbReference>
<dbReference type="PhylomeDB" id="Q9Y6X6"/>
<dbReference type="TreeFam" id="TF332267"/>
<dbReference type="PathwayCommons" id="Q9Y6X6"/>
<dbReference type="SignaLink" id="Q9Y6X6"/>
<dbReference type="BioGRID-ORCS" id="23026">
    <property type="hits" value="9 hits in 1149 CRISPR screens"/>
</dbReference>
<dbReference type="ChiTaRS" id="MYO16">
    <property type="organism name" value="human"/>
</dbReference>
<dbReference type="GenomeRNAi" id="23026"/>
<dbReference type="Pharos" id="Q9Y6X6">
    <property type="development level" value="Tbio"/>
</dbReference>
<dbReference type="PRO" id="PR:Q9Y6X6"/>
<dbReference type="Proteomes" id="UP000005640">
    <property type="component" value="Chromosome 13"/>
</dbReference>
<dbReference type="RNAct" id="Q9Y6X6">
    <property type="molecule type" value="protein"/>
</dbReference>
<dbReference type="Bgee" id="ENSG00000041515">
    <property type="expression patterns" value="Expressed in cortical plate and 99 other cell types or tissues"/>
</dbReference>
<dbReference type="ExpressionAtlas" id="Q9Y6X6">
    <property type="expression patterns" value="baseline and differential"/>
</dbReference>
<dbReference type="GO" id="GO:0005737">
    <property type="term" value="C:cytoplasm"/>
    <property type="evidence" value="ECO:0000250"/>
    <property type="project" value="HGNC-UCL"/>
</dbReference>
<dbReference type="GO" id="GO:0016459">
    <property type="term" value="C:myosin complex"/>
    <property type="evidence" value="ECO:0000318"/>
    <property type="project" value="GO_Central"/>
</dbReference>
<dbReference type="GO" id="GO:0005654">
    <property type="term" value="C:nucleoplasm"/>
    <property type="evidence" value="ECO:0000314"/>
    <property type="project" value="HGNC-UCL"/>
</dbReference>
<dbReference type="GO" id="GO:0048471">
    <property type="term" value="C:perinuclear region of cytoplasm"/>
    <property type="evidence" value="ECO:0000314"/>
    <property type="project" value="HGNC-UCL"/>
</dbReference>
<dbReference type="GO" id="GO:0005886">
    <property type="term" value="C:plasma membrane"/>
    <property type="evidence" value="ECO:0000250"/>
    <property type="project" value="HGNC-UCL"/>
</dbReference>
<dbReference type="GO" id="GO:0051015">
    <property type="term" value="F:actin filament binding"/>
    <property type="evidence" value="ECO:0000250"/>
    <property type="project" value="HGNC-UCL"/>
</dbReference>
<dbReference type="GO" id="GO:0005524">
    <property type="term" value="F:ATP binding"/>
    <property type="evidence" value="ECO:0007669"/>
    <property type="project" value="UniProtKB-KW"/>
</dbReference>
<dbReference type="GO" id="GO:0003774">
    <property type="term" value="F:cytoskeletal motor activity"/>
    <property type="evidence" value="ECO:0007669"/>
    <property type="project" value="InterPro"/>
</dbReference>
<dbReference type="GO" id="GO:0019903">
    <property type="term" value="F:protein phosphatase binding"/>
    <property type="evidence" value="ECO:0000318"/>
    <property type="project" value="GO_Central"/>
</dbReference>
<dbReference type="GO" id="GO:0021549">
    <property type="term" value="P:cerebellum development"/>
    <property type="evidence" value="ECO:0000250"/>
    <property type="project" value="HGNC-UCL"/>
</dbReference>
<dbReference type="GO" id="GO:0008285">
    <property type="term" value="P:negative regulation of cell population proliferation"/>
    <property type="evidence" value="ECO:0000250"/>
    <property type="project" value="HGNC-UCL"/>
</dbReference>
<dbReference type="GO" id="GO:2000134">
    <property type="term" value="P:negative regulation of G1/S transition of mitotic cell cycle"/>
    <property type="evidence" value="ECO:0000250"/>
    <property type="project" value="HGNC"/>
</dbReference>
<dbReference type="GO" id="GO:0048812">
    <property type="term" value="P:neuron projection morphogenesis"/>
    <property type="evidence" value="ECO:0000318"/>
    <property type="project" value="GO_Central"/>
</dbReference>
<dbReference type="GO" id="GO:0043491">
    <property type="term" value="P:phosphatidylinositol 3-kinase/protein kinase B signal transduction"/>
    <property type="evidence" value="ECO:0000318"/>
    <property type="project" value="GO_Central"/>
</dbReference>
<dbReference type="CDD" id="cd14878">
    <property type="entry name" value="MYSc_Myo16"/>
    <property type="match status" value="1"/>
</dbReference>
<dbReference type="FunFam" id="1.20.5.4820:FF:000006">
    <property type="entry name" value="Myosin XVI"/>
    <property type="match status" value="1"/>
</dbReference>
<dbReference type="FunFam" id="1.25.40.20:FF:000168">
    <property type="entry name" value="Myosin XVI"/>
    <property type="match status" value="1"/>
</dbReference>
<dbReference type="FunFam" id="1.10.10.820:FF:000013">
    <property type="entry name" value="Unconventional myosin-XVI"/>
    <property type="match status" value="1"/>
</dbReference>
<dbReference type="FunFam" id="1.25.40.20:FF:000100">
    <property type="entry name" value="unconventional myosin-XVI"/>
    <property type="match status" value="1"/>
</dbReference>
<dbReference type="Gene3D" id="1.10.10.820">
    <property type="match status" value="1"/>
</dbReference>
<dbReference type="Gene3D" id="1.20.5.4820">
    <property type="match status" value="1"/>
</dbReference>
<dbReference type="Gene3D" id="1.20.58.530">
    <property type="match status" value="1"/>
</dbReference>
<dbReference type="Gene3D" id="1.25.40.20">
    <property type="entry name" value="Ankyrin repeat-containing domain"/>
    <property type="match status" value="2"/>
</dbReference>
<dbReference type="Gene3D" id="3.40.850.10">
    <property type="entry name" value="Kinesin motor domain"/>
    <property type="match status" value="1"/>
</dbReference>
<dbReference type="Gene3D" id="1.20.120.720">
    <property type="entry name" value="Myosin VI head, motor domain, U50 subdomain"/>
    <property type="match status" value="1"/>
</dbReference>
<dbReference type="InterPro" id="IPR002110">
    <property type="entry name" value="Ankyrin_rpt"/>
</dbReference>
<dbReference type="InterPro" id="IPR036770">
    <property type="entry name" value="Ankyrin_rpt-contain_sf"/>
</dbReference>
<dbReference type="InterPro" id="IPR036961">
    <property type="entry name" value="Kinesin_motor_dom_sf"/>
</dbReference>
<dbReference type="InterPro" id="IPR052838">
    <property type="entry name" value="Myosin-XVI"/>
</dbReference>
<dbReference type="InterPro" id="IPR001609">
    <property type="entry name" value="Myosin_head_motor_dom-like"/>
</dbReference>
<dbReference type="InterPro" id="IPR036042">
    <property type="entry name" value="MYSc_Myo16"/>
</dbReference>
<dbReference type="InterPro" id="IPR029353">
    <property type="entry name" value="NYAP_C"/>
</dbReference>
<dbReference type="InterPro" id="IPR039482">
    <property type="entry name" value="NYAP_N"/>
</dbReference>
<dbReference type="InterPro" id="IPR027417">
    <property type="entry name" value="P-loop_NTPase"/>
</dbReference>
<dbReference type="PANTHER" id="PTHR47335">
    <property type="entry name" value="UNCONVENTIONAL MYOSIN-XVI"/>
    <property type="match status" value="1"/>
</dbReference>
<dbReference type="PANTHER" id="PTHR47335:SF1">
    <property type="entry name" value="UNCONVENTIONAL MYOSIN-XVI"/>
    <property type="match status" value="1"/>
</dbReference>
<dbReference type="Pfam" id="PF12796">
    <property type="entry name" value="Ank_2"/>
    <property type="match status" value="2"/>
</dbReference>
<dbReference type="Pfam" id="PF00063">
    <property type="entry name" value="Myosin_head"/>
    <property type="match status" value="1"/>
</dbReference>
<dbReference type="Pfam" id="PF15452">
    <property type="entry name" value="NYAP_C"/>
    <property type="match status" value="1"/>
</dbReference>
<dbReference type="Pfam" id="PF15439">
    <property type="entry name" value="NYAP_N"/>
    <property type="match status" value="1"/>
</dbReference>
<dbReference type="PRINTS" id="PR00193">
    <property type="entry name" value="MYOSINHEAVY"/>
</dbReference>
<dbReference type="SMART" id="SM00248">
    <property type="entry name" value="ANK"/>
    <property type="match status" value="5"/>
</dbReference>
<dbReference type="SMART" id="SM00242">
    <property type="entry name" value="MYSc"/>
    <property type="match status" value="1"/>
</dbReference>
<dbReference type="SUPFAM" id="SSF48403">
    <property type="entry name" value="Ankyrin repeat"/>
    <property type="match status" value="1"/>
</dbReference>
<dbReference type="SUPFAM" id="SSF52540">
    <property type="entry name" value="P-loop containing nucleoside triphosphate hydrolases"/>
    <property type="match status" value="1"/>
</dbReference>
<dbReference type="PROSITE" id="PS50297">
    <property type="entry name" value="ANK_REP_REGION"/>
    <property type="match status" value="1"/>
</dbReference>
<dbReference type="PROSITE" id="PS50088">
    <property type="entry name" value="ANK_REPEAT"/>
    <property type="match status" value="4"/>
</dbReference>
<dbReference type="PROSITE" id="PS50096">
    <property type="entry name" value="IQ"/>
    <property type="match status" value="1"/>
</dbReference>
<dbReference type="PROSITE" id="PS51456">
    <property type="entry name" value="MYOSIN_MOTOR"/>
    <property type="match status" value="1"/>
</dbReference>
<comment type="function">
    <text evidence="1">Myosins are actin-based motor molecules with ATPase activity. Unconventional myosins serve in intracellular movements. Their highly divergent tails are presumed to bind to membranous compartments, which would be moved relative to actin filaments. May be involved in targeting of the catalytic subunit of protein phosphatase 1 during brain development. Activates PI3K and concomitantly recruits the WAVE1 complex to the close vicinity of PI3K and regulates neuronal morphogenesis (By similarity).</text>
</comment>
<comment type="subunit">
    <text evidence="2 3 14">Binds PPP1CA and/or PPP1CC. Binds F-actin in an ATP-sensitive manner. Interacts with ACOT9, ARHGAP26 and PIK3R2. Interacts with components of the WAVE1 complex, CYFIP1 and NCKAP1; this interaction mediates PI3K-WAVE1 association and actin cytoskeleton remodeling (By similarity). Interacts with KIRREL3 (PubMed:25902260).</text>
</comment>
<comment type="interaction">
    <interactant intactId="EBI-310686">
        <id>Q9Y6X6</id>
    </interactant>
    <interactant intactId="EBI-16427312">
        <id>Q8IZU9</id>
        <label>KIRREL3</label>
    </interactant>
    <organismsDiffer>false</organismsDiffer>
    <experiments>4</experiments>
</comment>
<comment type="subcellular location">
    <subcellularLocation>
        <location evidence="3">Cytoplasm</location>
    </subcellularLocation>
    <text evidence="3">Found in puncta in soma and processes of astrocytes and dissociated cerebellar cells with the morphology of migrating granule cells.</text>
</comment>
<comment type="alternative products">
    <event type="alternative splicing"/>
    <isoform>
        <id>Q9Y6X6-1</id>
        <name evidence="8">1</name>
        <sequence type="displayed"/>
    </isoform>
    <isoform>
        <id>Q9Y6X6-2</id>
        <name evidence="9">2</name>
        <sequence type="described" ref="VSP_052451"/>
    </isoform>
    <isoform>
        <id>Q9Y6X6-3</id>
        <name evidence="10">3</name>
        <sequence type="described" ref="VSP_052449 VSP_052450"/>
    </isoform>
    <isoform>
        <id>Q9Y6X6-4</id>
        <name evidence="10">4</name>
        <sequence type="described" ref="VSP_052447 VSP_052448 VSP_052449 VSP_052450"/>
    </isoform>
</comment>
<comment type="PTM">
    <text evidence="1">Phosphorylated on tyrosine residues by FYN upon stimulation with CNTN5.</text>
</comment>
<comment type="similarity">
    <text evidence="19">In the N-terminal section; belongs to the TRAFAC class myosin-kinesin ATPase superfamily. Myosin family.</text>
</comment>
<comment type="similarity">
    <text evidence="19">In the C-terminal section; belongs to the NYAP family.</text>
</comment>
<comment type="sequence caution" evidence="19">
    <conflict type="erroneous initiation">
        <sequence resource="EMBL-CDS" id="BAA74888"/>
    </conflict>
    <text>Extended N-terminus.</text>
</comment>
<comment type="sequence caution" evidence="19">
    <conflict type="erroneous initiation">
        <sequence resource="EMBL-CDS" id="BAC04608"/>
    </conflict>
    <text>Truncated N-terminus.</text>
</comment>
<comment type="sequence caution" evidence="19">
    <conflict type="erroneous initiation">
        <sequence resource="EMBL-CDS" id="BAC87143"/>
    </conflict>
    <text>Extended N-terminus.</text>
</comment>
<sequence>MEIDQCLLESLPLGQRQRLVKRMRCEQIKAYYEREKAFQKQEGFLKRLKHAKNPKVHFNLTDMLQDAIIHHNDKEVLRLLKEGADPHTLVSSGGSLLHLCARYDNAFIAEILIDRGVNVNHQDEDFWTPMHIACACDNPDIVLLLVLAGANVLLQDVNGNIPLDYAVEGTESSSILLTYLDENGVDLTSLRQMKLQRPMSMLTDVKHFLSSGGNVNEKNDEGVTLLHMACASGYKEVVSLILEHGGDLNIVDDQYWTPLHLAAKYGQTNLVKLLLMHQANPHLVNCNEEKASDIAASEFIEEMLLKAEIAWEEKMKEPLSASTLAQEEPYEEIIHDLPVLSSKLSPLVLPIAKQDSLLEKDIMFKDATKGLCKQQSQDSIPENPMMSGSTKPEQVKLMPPAPNDDLATLSELNDGSLLYEIQKRFGNNQIYTFIGDILLLVNPYKELPIYSSMVSQLYFSSSGKLCSSLPPHLFSCVERAFHQLFREQRPQCFILSGERGSGKSEASKQIIRHLTCRAGASRATLDSRFKHVVCILEAFGHAKTTLNDLSSCFIKYFELQFCERKQQLTGARIYTYLLEKSRLVSQPLGQSNFLIFYLLMDGLSAEEKYGLHLNNLCAHRYLNQTIQDDASTGERSLNREKLAVLKRALNVVGFSSLEVENLFVILAAILHLGDIRFTALNEGNSAFVSDLQLLEQVAGMLQVSTDELASALTTDIQYFKGDMIIRRHTIQIAEFFRDLLAKSLYSRLFSFLVNTMNSCLHSQDEQKSMQTLDIGILDIFGFEEFQKNEFEQLCVNMTNEKMHHYINEVLFLHEQVECVQEGVTMETAYSPGNQNGVLDFFFQKPSGFLTLLDEESQMIWSVESNFPKKLQSLLESSNTNAVYSPMKDGNGNVALKDHGTAFTIMHYAGRVMYDVVGAIEKNKDSLSQNLLFVMKTSENVVINHLFQSKLSQTGSLVSAYPSFKFRGHKSALLSKKMTASSIIGENKNYLELSKLLKKKGTSTFLQRLERGDPVTIASQLRKSLMDIIGKLQKCTPHFIHCIRPNNSKLPDTFDNFYVSAQLQYIGVLEMVKIFRYGYPVRLSFSDFLSRYKPLADTFLREKKEQSAAERCRLVLQQCKLQGWQMGVRKVFLKYWHADQLNDLCLQLQRKIITCQKVIRGFLARQHLLQRISIRQQEVTSINSFLQNTEDMGLKTYDALVIQNASDIARENDRLRSEMNAPYHKEKLEVRNMQEEGSKRTDDKSGPRHFHPSSMSVCAAVDGLGQCLVGPSIWSPSLHSVFSMDDSSSLPSPRKQPPPKPKRDPNTRLSASYEAVSACLSAAREAANEALARPRPHSDDYSTMKKIPPRKPKRSPNTKLSGSYEEISGSRPGDARPAGAPGAAARVLTPGTPQCALPPAAPPGDEDDSEPVYIEMLGHAARPDSPDPGESVYEEMKCCLPDDGGPGAGSFLLHGASPPLLHRAPEDEAAGPPGDACDIPPPFPNLLPHRPPLLVFPPTPVTCSPASDESPLTPLEVKKLPVLETNLKYPVQPEGSSPLSPQYSKSQKGDGDRPASPGLALFNGSGRASPPSTPPPPPPPPGPPPAPYRPCAHLAFPPEPAPVNAGKAGPSAEAPKVHPKPNSAPVAGPCSSFPKIPYSPVKATRADARKAGSSASPPAPYSPPSSRPLSSPLDELASLFNSGRSVLRKSAAGRKIREAEGFETNMNISSRDDPSTSEITSETQDRNANNHGIQLSNSLSSAITAENGNSISNGLPEEDGYSRLSISGTGTSTFQRHRDSHTTQVIHQLRLSENESVALQELLDWRRKLCEEGQDWQQILHHAEPRVPPPPPCKKPSLLKKPEGASCNRLPSELWDTTI</sequence>
<evidence type="ECO:0000250" key="1"/>
<evidence type="ECO:0000250" key="2">
    <source>
        <dbReference type="UniProtKB" id="Q5DU14"/>
    </source>
</evidence>
<evidence type="ECO:0000250" key="3">
    <source>
        <dbReference type="UniProtKB" id="Q9ERC1"/>
    </source>
</evidence>
<evidence type="ECO:0000255" key="4"/>
<evidence type="ECO:0000255" key="5">
    <source>
        <dbReference type="PROSITE-ProRule" id="PRU00116"/>
    </source>
</evidence>
<evidence type="ECO:0000255" key="6">
    <source>
        <dbReference type="PROSITE-ProRule" id="PRU00782"/>
    </source>
</evidence>
<evidence type="ECO:0000256" key="7">
    <source>
        <dbReference type="SAM" id="MobiDB-lite"/>
    </source>
</evidence>
<evidence type="ECO:0000269" key="8">
    <source>
    </source>
</evidence>
<evidence type="ECO:0000269" key="9">
    <source>
    </source>
</evidence>
<evidence type="ECO:0000269" key="10">
    <source>
    </source>
</evidence>
<evidence type="ECO:0000269" key="11">
    <source>
    </source>
</evidence>
<evidence type="ECO:0000269" key="12">
    <source>
    </source>
</evidence>
<evidence type="ECO:0000269" key="13">
    <source>
    </source>
</evidence>
<evidence type="ECO:0000269" key="14">
    <source>
    </source>
</evidence>
<evidence type="ECO:0000269" key="15">
    <source>
    </source>
</evidence>
<evidence type="ECO:0000269" key="16">
    <source ref="3"/>
</evidence>
<evidence type="ECO:0000303" key="17">
    <source>
    </source>
</evidence>
<evidence type="ECO:0000303" key="18">
    <source>
    </source>
</evidence>
<evidence type="ECO:0000305" key="19"/>
<evidence type="ECO:0000312" key="20">
    <source>
        <dbReference type="EMBL" id="AL136132"/>
    </source>
</evidence>
<evidence type="ECO:0000312" key="21">
    <source>
        <dbReference type="EMBL" id="BAA74888.2"/>
    </source>
</evidence>
<evidence type="ECO:0000312" key="22">
    <source>
        <dbReference type="EMBL" id="BAC04608.1"/>
    </source>
</evidence>
<evidence type="ECO:0000312" key="23">
    <source>
        <dbReference type="EMBL" id="CAD39107.2"/>
    </source>
</evidence>
<evidence type="ECO:0000312" key="24">
    <source>
        <dbReference type="HGNC" id="HGNC:29822"/>
    </source>
</evidence>
<organism>
    <name type="scientific">Homo sapiens</name>
    <name type="common">Human</name>
    <dbReference type="NCBI Taxonomy" id="9606"/>
    <lineage>
        <taxon>Eukaryota</taxon>
        <taxon>Metazoa</taxon>
        <taxon>Chordata</taxon>
        <taxon>Craniata</taxon>
        <taxon>Vertebrata</taxon>
        <taxon>Euteleostomi</taxon>
        <taxon>Mammalia</taxon>
        <taxon>Eutheria</taxon>
        <taxon>Euarchontoglires</taxon>
        <taxon>Primates</taxon>
        <taxon>Haplorrhini</taxon>
        <taxon>Catarrhini</taxon>
        <taxon>Hominidae</taxon>
        <taxon>Homo</taxon>
    </lineage>
</organism>
<protein>
    <recommendedName>
        <fullName>Unconventional myosin-XVI</fullName>
    </recommendedName>
    <alternativeName>
        <fullName>Neuronal tyrosine-phosphorylated phosphoinositide-3-kinase adapter 3</fullName>
    </alternativeName>
    <alternativeName>
        <fullName>Unconventional myosin-16</fullName>
    </alternativeName>
</protein>
<keyword id="KW-0009">Actin-binding</keyword>
<keyword id="KW-0025">Alternative splicing</keyword>
<keyword id="KW-0040">ANK repeat</keyword>
<keyword id="KW-0067">ATP-binding</keyword>
<keyword id="KW-0963">Cytoplasm</keyword>
<keyword id="KW-0505">Motor protein</keyword>
<keyword id="KW-0518">Myosin</keyword>
<keyword id="KW-0547">Nucleotide-binding</keyword>
<keyword id="KW-0597">Phosphoprotein</keyword>
<keyword id="KW-1267">Proteomics identification</keyword>
<keyword id="KW-1185">Reference proteome</keyword>
<keyword id="KW-0677">Repeat</keyword>
<proteinExistence type="evidence at protein level"/>
<reference evidence="19 21" key="1">
    <citation type="journal article" date="1998" name="DNA Res.">
        <title>Prediction of the coding sequences of unidentified human genes. XII. The complete sequences of 100 new cDNA clones from brain which code for large proteins in vitro.</title>
        <authorList>
            <person name="Nagase T."/>
            <person name="Ishikawa K."/>
            <person name="Suyama M."/>
            <person name="Kikuno R."/>
            <person name="Hirosawa M."/>
            <person name="Miyajima N."/>
            <person name="Tanaka A."/>
            <person name="Kotani H."/>
            <person name="Nomura N."/>
            <person name="Ohara O."/>
        </authorList>
    </citation>
    <scope>NUCLEOTIDE SEQUENCE [LARGE SCALE MRNA] (ISOFORM 1)</scope>
    <scope>VARIANT ALA-831</scope>
    <source>
        <tissue evidence="21">Brain</tissue>
    </source>
</reference>
<reference evidence="19 22" key="2">
    <citation type="journal article" date="2004" name="Nat. Genet.">
        <title>Complete sequencing and characterization of 21,243 full-length human cDNAs.</title>
        <authorList>
            <person name="Ota T."/>
            <person name="Suzuki Y."/>
            <person name="Nishikawa T."/>
            <person name="Otsuki T."/>
            <person name="Sugiyama T."/>
            <person name="Irie R."/>
            <person name="Wakamatsu A."/>
            <person name="Hayashi K."/>
            <person name="Sato H."/>
            <person name="Nagai K."/>
            <person name="Kimura K."/>
            <person name="Makita H."/>
            <person name="Sekine M."/>
            <person name="Obayashi M."/>
            <person name="Nishi T."/>
            <person name="Shibahara T."/>
            <person name="Tanaka T."/>
            <person name="Ishii S."/>
            <person name="Yamamoto J."/>
            <person name="Saito K."/>
            <person name="Kawai Y."/>
            <person name="Isono Y."/>
            <person name="Nakamura Y."/>
            <person name="Nagahari K."/>
            <person name="Murakami K."/>
            <person name="Yasuda T."/>
            <person name="Iwayanagi T."/>
            <person name="Wagatsuma M."/>
            <person name="Shiratori A."/>
            <person name="Sudo H."/>
            <person name="Hosoiri T."/>
            <person name="Kaku Y."/>
            <person name="Kodaira H."/>
            <person name="Kondo H."/>
            <person name="Sugawara M."/>
            <person name="Takahashi M."/>
            <person name="Kanda K."/>
            <person name="Yokoi T."/>
            <person name="Furuya T."/>
            <person name="Kikkawa E."/>
            <person name="Omura Y."/>
            <person name="Abe K."/>
            <person name="Kamihara K."/>
            <person name="Katsuta N."/>
            <person name="Sato K."/>
            <person name="Tanikawa M."/>
            <person name="Yamazaki M."/>
            <person name="Ninomiya K."/>
            <person name="Ishibashi T."/>
            <person name="Yamashita H."/>
            <person name="Murakawa K."/>
            <person name="Fujimori K."/>
            <person name="Tanai H."/>
            <person name="Kimata M."/>
            <person name="Watanabe M."/>
            <person name="Hiraoka S."/>
            <person name="Chiba Y."/>
            <person name="Ishida S."/>
            <person name="Ono Y."/>
            <person name="Takiguchi S."/>
            <person name="Watanabe S."/>
            <person name="Yosida M."/>
            <person name="Hotuta T."/>
            <person name="Kusano J."/>
            <person name="Kanehori K."/>
            <person name="Takahashi-Fujii A."/>
            <person name="Hara H."/>
            <person name="Tanase T.-O."/>
            <person name="Nomura Y."/>
            <person name="Togiya S."/>
            <person name="Komai F."/>
            <person name="Hara R."/>
            <person name="Takeuchi K."/>
            <person name="Arita M."/>
            <person name="Imose N."/>
            <person name="Musashino K."/>
            <person name="Yuuki H."/>
            <person name="Oshima A."/>
            <person name="Sasaki N."/>
            <person name="Aotsuka S."/>
            <person name="Yoshikawa Y."/>
            <person name="Matsunawa H."/>
            <person name="Ichihara T."/>
            <person name="Shiohata N."/>
            <person name="Sano S."/>
            <person name="Moriya S."/>
            <person name="Momiyama H."/>
            <person name="Satoh N."/>
            <person name="Takami S."/>
            <person name="Terashima Y."/>
            <person name="Suzuki O."/>
            <person name="Nakagawa S."/>
            <person name="Senoh A."/>
            <person name="Mizoguchi H."/>
            <person name="Goto Y."/>
            <person name="Shimizu F."/>
            <person name="Wakebe H."/>
            <person name="Hishigaki H."/>
            <person name="Watanabe T."/>
            <person name="Sugiyama A."/>
            <person name="Takemoto M."/>
            <person name="Kawakami B."/>
            <person name="Yamazaki M."/>
            <person name="Watanabe K."/>
            <person name="Kumagai A."/>
            <person name="Itakura S."/>
            <person name="Fukuzumi Y."/>
            <person name="Fujimori Y."/>
            <person name="Komiyama M."/>
            <person name="Tashiro H."/>
            <person name="Tanigami A."/>
            <person name="Fujiwara T."/>
            <person name="Ono T."/>
            <person name="Yamada K."/>
            <person name="Fujii Y."/>
            <person name="Ozaki K."/>
            <person name="Hirao M."/>
            <person name="Ohmori Y."/>
            <person name="Kawabata A."/>
            <person name="Hikiji T."/>
            <person name="Kobatake N."/>
            <person name="Inagaki H."/>
            <person name="Ikema Y."/>
            <person name="Okamoto S."/>
            <person name="Okitani R."/>
            <person name="Kawakami T."/>
            <person name="Noguchi S."/>
            <person name="Itoh T."/>
            <person name="Shigeta K."/>
            <person name="Senba T."/>
            <person name="Matsumura K."/>
            <person name="Nakajima Y."/>
            <person name="Mizuno T."/>
            <person name="Morinaga M."/>
            <person name="Sasaki M."/>
            <person name="Togashi T."/>
            <person name="Oyama M."/>
            <person name="Hata H."/>
            <person name="Watanabe M."/>
            <person name="Komatsu T."/>
            <person name="Mizushima-Sugano J."/>
            <person name="Satoh T."/>
            <person name="Shirai Y."/>
            <person name="Takahashi Y."/>
            <person name="Nakagawa K."/>
            <person name="Okumura K."/>
            <person name="Nagase T."/>
            <person name="Nomura N."/>
            <person name="Kikuchi H."/>
            <person name="Masuho Y."/>
            <person name="Yamashita R."/>
            <person name="Nakai K."/>
            <person name="Yada T."/>
            <person name="Nakamura Y."/>
            <person name="Ohara O."/>
            <person name="Isogai T."/>
            <person name="Sugano S."/>
        </authorList>
    </citation>
    <scope>NUCLEOTIDE SEQUENCE [LARGE SCALE MRNA] (ISOFORM 2)</scope>
    <scope>NUCLEOTIDE SEQUENCE [LARGE SCALE MRNA] OF 1-995 (ISOFORMS 1/3)</scope>
    <scope>VARIANTS THR-385 AND ALA-831</scope>
    <source>
        <tissue evidence="22">Brain</tissue>
    </source>
</reference>
<reference evidence="19 23" key="3">
    <citation type="submission" date="2007-01" db="EMBL/GenBank/DDBJ databases">
        <title>Multiplex amplification and cloning of 5'-ends of cDNA by ligase-free recombination: preparation of full-length cDNA clones encoding motor proteins.</title>
        <authorList>
            <person name="Yamakawa H."/>
            <person name="Kikuno R.F."/>
            <person name="Nagase T."/>
            <person name="Ohara O."/>
        </authorList>
    </citation>
    <scope>NUCLEOTIDE SEQUENCE [LARGE SCALE MRNA] (ISOFORM 1)</scope>
    <scope>VARIANT ALA-831</scope>
    <source>
        <tissue>Brain</tissue>
    </source>
</reference>
<reference evidence="20" key="4">
    <citation type="journal article" date="2004" name="Nature">
        <title>The DNA sequence and analysis of human chromosome 13.</title>
        <authorList>
            <person name="Dunham A."/>
            <person name="Matthews L.H."/>
            <person name="Burton J."/>
            <person name="Ashurst J.L."/>
            <person name="Howe K.L."/>
            <person name="Ashcroft K.J."/>
            <person name="Beare D.M."/>
            <person name="Burford D.C."/>
            <person name="Hunt S.E."/>
            <person name="Griffiths-Jones S."/>
            <person name="Jones M.C."/>
            <person name="Keenan S.J."/>
            <person name="Oliver K."/>
            <person name="Scott C.E."/>
            <person name="Ainscough R."/>
            <person name="Almeida J.P."/>
            <person name="Ambrose K.D."/>
            <person name="Andrews D.T."/>
            <person name="Ashwell R.I.S."/>
            <person name="Babbage A.K."/>
            <person name="Bagguley C.L."/>
            <person name="Bailey J."/>
            <person name="Bannerjee R."/>
            <person name="Barlow K.F."/>
            <person name="Bates K."/>
            <person name="Beasley H."/>
            <person name="Bird C.P."/>
            <person name="Bray-Allen S."/>
            <person name="Brown A.J."/>
            <person name="Brown J.Y."/>
            <person name="Burrill W."/>
            <person name="Carder C."/>
            <person name="Carter N.P."/>
            <person name="Chapman J.C."/>
            <person name="Clamp M.E."/>
            <person name="Clark S.Y."/>
            <person name="Clarke G."/>
            <person name="Clee C.M."/>
            <person name="Clegg S.C."/>
            <person name="Cobley V."/>
            <person name="Collins J.E."/>
            <person name="Corby N."/>
            <person name="Coville G.J."/>
            <person name="Deloukas P."/>
            <person name="Dhami P."/>
            <person name="Dunham I."/>
            <person name="Dunn M."/>
            <person name="Earthrowl M.E."/>
            <person name="Ellington A.G."/>
            <person name="Faulkner L."/>
            <person name="Frankish A.G."/>
            <person name="Frankland J."/>
            <person name="French L."/>
            <person name="Garner P."/>
            <person name="Garnett J."/>
            <person name="Gilbert J.G.R."/>
            <person name="Gilson C.J."/>
            <person name="Ghori J."/>
            <person name="Grafham D.V."/>
            <person name="Gribble S.M."/>
            <person name="Griffiths C."/>
            <person name="Hall R.E."/>
            <person name="Hammond S."/>
            <person name="Harley J.L."/>
            <person name="Hart E.A."/>
            <person name="Heath P.D."/>
            <person name="Howden P.J."/>
            <person name="Huckle E.J."/>
            <person name="Hunt P.J."/>
            <person name="Hunt A.R."/>
            <person name="Johnson C."/>
            <person name="Johnson D."/>
            <person name="Kay M."/>
            <person name="Kimberley A.M."/>
            <person name="King A."/>
            <person name="Laird G.K."/>
            <person name="Langford C.J."/>
            <person name="Lawlor S."/>
            <person name="Leongamornlert D.A."/>
            <person name="Lloyd D.M."/>
            <person name="Lloyd C."/>
            <person name="Loveland J.E."/>
            <person name="Lovell J."/>
            <person name="Martin S."/>
            <person name="Mashreghi-Mohammadi M."/>
            <person name="McLaren S.J."/>
            <person name="McMurray A."/>
            <person name="Milne S."/>
            <person name="Moore M.J.F."/>
            <person name="Nickerson T."/>
            <person name="Palmer S.A."/>
            <person name="Pearce A.V."/>
            <person name="Peck A.I."/>
            <person name="Pelan S."/>
            <person name="Phillimore B."/>
            <person name="Porter K.M."/>
            <person name="Rice C.M."/>
            <person name="Searle S."/>
            <person name="Sehra H.K."/>
            <person name="Shownkeen R."/>
            <person name="Skuce C.D."/>
            <person name="Smith M."/>
            <person name="Steward C.A."/>
            <person name="Sycamore N."/>
            <person name="Tester J."/>
            <person name="Thomas D.W."/>
            <person name="Tracey A."/>
            <person name="Tromans A."/>
            <person name="Tubby B."/>
            <person name="Wall M."/>
            <person name="Wallis J.M."/>
            <person name="West A.P."/>
            <person name="Whitehead S.L."/>
            <person name="Willey D.L."/>
            <person name="Wilming L."/>
            <person name="Wray P.W."/>
            <person name="Wright M.W."/>
            <person name="Young L."/>
            <person name="Coulson A."/>
            <person name="Durbin R.M."/>
            <person name="Hubbard T."/>
            <person name="Sulston J.E."/>
            <person name="Beck S."/>
            <person name="Bentley D.R."/>
            <person name="Rogers J."/>
            <person name="Ross M.T."/>
        </authorList>
    </citation>
    <scope>NUCLEOTIDE SEQUENCE [LARGE SCALE GENOMIC DNA]</scope>
</reference>
<reference key="5">
    <citation type="journal article" date="2004" name="Genome Res.">
        <title>The status, quality, and expansion of the NIH full-length cDNA project: the Mammalian Gene Collection (MGC).</title>
        <authorList>
            <consortium name="The MGC Project Team"/>
        </authorList>
    </citation>
    <scope>NUCLEOTIDE SEQUENCE [LARGE SCALE MRNA] (ISOFORM 1)</scope>
    <scope>VARIANT ALA-831</scope>
</reference>
<reference key="6">
    <citation type="journal article" date="2007" name="BMC Genomics">
        <title>The full-ORF clone resource of the German cDNA consortium.</title>
        <authorList>
            <person name="Bechtel S."/>
            <person name="Rosenfelder H."/>
            <person name="Duda A."/>
            <person name="Schmidt C.P."/>
            <person name="Ernst U."/>
            <person name="Wellenreuther R."/>
            <person name="Mehrle A."/>
            <person name="Schuster C."/>
            <person name="Bahr A."/>
            <person name="Bloecker H."/>
            <person name="Heubner D."/>
            <person name="Hoerlein A."/>
            <person name="Michel G."/>
            <person name="Wedler H."/>
            <person name="Koehrer K."/>
            <person name="Ottenwaelder B."/>
            <person name="Poustka A."/>
            <person name="Wiemann S."/>
            <person name="Schupp I."/>
        </authorList>
    </citation>
    <scope>NUCLEOTIDE SEQUENCE [LARGE SCALE MRNA] OF 1-935 (ISOFORMS 1/2/3)</scope>
    <scope>VARIANT ALA-831</scope>
    <source>
        <tissue>Amygdala</tissue>
    </source>
</reference>
<reference key="7">
    <citation type="journal article" date="2015" name="PLoS ONE">
        <title>Autism and intellectual disability-associated KIRREL3 interacts with neuronal proteins MAP1B and MYO16 with potential roles in neurodevelopment.</title>
        <authorList>
            <person name="Liu Y.F."/>
            <person name="Sowell S.M."/>
            <person name="Luo Y."/>
            <person name="Chaubey A."/>
            <person name="Cameron R.S."/>
            <person name="Kim H.G."/>
            <person name="Srivastava A.K."/>
        </authorList>
    </citation>
    <scope>INTERACTION WITH KIRREL3</scope>
</reference>
<reference key="8">
    <citation type="journal article" date="2011" name="Nature">
        <title>Exome sequencing identifies frequent mutation of the SWI/SNF complex gene PBRM1 in renal carcinoma.</title>
        <authorList>
            <person name="Varela I."/>
            <person name="Tarpey P."/>
            <person name="Raine K."/>
            <person name="Huang D."/>
            <person name="Ong C.K."/>
            <person name="Stephens P."/>
            <person name="Davies H."/>
            <person name="Jones D."/>
            <person name="Lin M.L."/>
            <person name="Teague J."/>
            <person name="Bignell G."/>
            <person name="Butler A."/>
            <person name="Cho J."/>
            <person name="Dalgliesh G.L."/>
            <person name="Galappaththige D."/>
            <person name="Greenman C."/>
            <person name="Hardy C."/>
            <person name="Jia M."/>
            <person name="Latimer C."/>
            <person name="Lau K.W."/>
            <person name="Marshall J."/>
            <person name="McLaren S."/>
            <person name="Menzies A."/>
            <person name="Mudie L."/>
            <person name="Stebbings L."/>
            <person name="Largaespada D.A."/>
            <person name="Wessels L.F.A."/>
            <person name="Richard S."/>
            <person name="Kahnoski R.J."/>
            <person name="Anema J."/>
            <person name="Tuveson D.A."/>
            <person name="Perez-Mancera P.A."/>
            <person name="Mustonen V."/>
            <person name="Fischer A."/>
            <person name="Adams D.J."/>
            <person name="Rust A."/>
            <person name="Chan-On W."/>
            <person name="Subimerb C."/>
            <person name="Dykema K."/>
            <person name="Furge K."/>
            <person name="Campbell P.J."/>
            <person name="Teh B.T."/>
            <person name="Stratton M.R."/>
            <person name="Futreal P.A."/>
        </authorList>
    </citation>
    <scope>VARIANT HIS-1168</scope>
</reference>
<reference key="9">
    <citation type="journal article" date="2023" name="Hum. Genet.">
        <title>De novo MCM6 variants in neurodevelopmental disorders: a recognizable phenotype related to zinc binding residues.</title>
        <authorList>
            <person name="Smits D.J."/>
            <person name="Schot R."/>
            <person name="Popescu C.A."/>
            <person name="Dias K.R."/>
            <person name="Ades L."/>
            <person name="Briere L.C."/>
            <person name="Sweetser D.A."/>
            <person name="Kushima I."/>
            <person name="Aleksic B."/>
            <person name="Khan S."/>
            <person name="Karageorgou V."/>
            <person name="Ordonez N."/>
            <person name="Sleutels F.J.G.T."/>
            <person name="van der Kaay D.C.M."/>
            <person name="Van Mol C."/>
            <person name="Van Esch H."/>
            <person name="Bertoli-Avella A.M."/>
            <person name="Roscioli T."/>
            <person name="Mancini G.M.S."/>
        </authorList>
    </citation>
    <scope>VARIANTS CYS-829 AND THR-1258</scope>
</reference>